<proteinExistence type="inferred from homology"/>
<evidence type="ECO:0000255" key="1">
    <source>
        <dbReference type="HAMAP-Rule" id="MF_00137"/>
    </source>
</evidence>
<sequence length="236" mass="27442">MKKKIYEGSSKILYSAEEDFLLIMAFSDKAILETGETVDISGKGVLNNNISSFLMDKLEMIGIENHFIEKINMREQLIQYVEVFPIQVIISSVACSRFVKEFGMDEGYVFDKPIIDFKVRSREFKYPIVNEYQILNFGWLTRDEIKAVKEQALRIYDFLSGLFIGVGIRLVECKLEFGRVFNGEESIIMLTDEISPDNCRLWHINSNEKLGFELLEKEPNKVFESYQLIADRLKEK</sequence>
<feature type="chain" id="PRO_1000057888" description="Phosphoribosylaminoimidazole-succinocarboxamide synthase">
    <location>
        <begin position="1"/>
        <end position="236"/>
    </location>
</feature>
<name>PUR7_RICM5</name>
<protein>
    <recommendedName>
        <fullName evidence="1">Phosphoribosylaminoimidazole-succinocarboxamide synthase</fullName>
        <ecNumber evidence="1">6.3.2.6</ecNumber>
    </recommendedName>
    <alternativeName>
        <fullName evidence="1">SAICAR synthetase</fullName>
    </alternativeName>
</protein>
<comment type="catalytic activity">
    <reaction evidence="1">
        <text>5-amino-1-(5-phospho-D-ribosyl)imidazole-4-carboxylate + L-aspartate + ATP = (2S)-2-[5-amino-1-(5-phospho-beta-D-ribosyl)imidazole-4-carboxamido]succinate + ADP + phosphate + 2 H(+)</text>
        <dbReference type="Rhea" id="RHEA:22628"/>
        <dbReference type="ChEBI" id="CHEBI:15378"/>
        <dbReference type="ChEBI" id="CHEBI:29991"/>
        <dbReference type="ChEBI" id="CHEBI:30616"/>
        <dbReference type="ChEBI" id="CHEBI:43474"/>
        <dbReference type="ChEBI" id="CHEBI:58443"/>
        <dbReference type="ChEBI" id="CHEBI:77657"/>
        <dbReference type="ChEBI" id="CHEBI:456216"/>
        <dbReference type="EC" id="6.3.2.6"/>
    </reaction>
</comment>
<comment type="pathway">
    <text evidence="1">Purine metabolism; IMP biosynthesis via de novo pathway; 5-amino-1-(5-phospho-D-ribosyl)imidazole-4-carboxamide from 5-amino-1-(5-phospho-D-ribosyl)imidazole-4-carboxylate: step 1/2.</text>
</comment>
<comment type="similarity">
    <text evidence="1">Belongs to the SAICAR synthetase family.</text>
</comment>
<accession>A8F0X7</accession>
<organism>
    <name type="scientific">Rickettsia massiliae (strain Mtu5)</name>
    <dbReference type="NCBI Taxonomy" id="416276"/>
    <lineage>
        <taxon>Bacteria</taxon>
        <taxon>Pseudomonadati</taxon>
        <taxon>Pseudomonadota</taxon>
        <taxon>Alphaproteobacteria</taxon>
        <taxon>Rickettsiales</taxon>
        <taxon>Rickettsiaceae</taxon>
        <taxon>Rickettsieae</taxon>
        <taxon>Rickettsia</taxon>
        <taxon>spotted fever group</taxon>
    </lineage>
</organism>
<keyword id="KW-0067">ATP-binding</keyword>
<keyword id="KW-0436">Ligase</keyword>
<keyword id="KW-0547">Nucleotide-binding</keyword>
<keyword id="KW-0658">Purine biosynthesis</keyword>
<gene>
    <name evidence="1" type="primary">purC</name>
    <name type="ordered locus">RMA_0302</name>
</gene>
<reference key="1">
    <citation type="journal article" date="2007" name="Genome Res.">
        <title>Lateral gene transfer between obligate intracellular bacteria: evidence from the Rickettsia massiliae genome.</title>
        <authorList>
            <person name="Blanc G."/>
            <person name="Ogata H."/>
            <person name="Robert C."/>
            <person name="Audic S."/>
            <person name="Claverie J.-M."/>
            <person name="Raoult D."/>
        </authorList>
    </citation>
    <scope>NUCLEOTIDE SEQUENCE [LARGE SCALE GENOMIC DNA]</scope>
    <source>
        <strain>Mtu5</strain>
    </source>
</reference>
<dbReference type="EC" id="6.3.2.6" evidence="1"/>
<dbReference type="EMBL" id="CP000683">
    <property type="protein sequence ID" value="ABV84563.1"/>
    <property type="molecule type" value="Genomic_DNA"/>
</dbReference>
<dbReference type="RefSeq" id="WP_012152540.1">
    <property type="nucleotide sequence ID" value="NC_009900.1"/>
</dbReference>
<dbReference type="SMR" id="A8F0X7"/>
<dbReference type="KEGG" id="rms:RMA_0302"/>
<dbReference type="HOGENOM" id="CLU_061495_2_0_5"/>
<dbReference type="UniPathway" id="UPA00074">
    <property type="reaction ID" value="UER00131"/>
</dbReference>
<dbReference type="Proteomes" id="UP000001311">
    <property type="component" value="Chromosome"/>
</dbReference>
<dbReference type="GO" id="GO:0005829">
    <property type="term" value="C:cytosol"/>
    <property type="evidence" value="ECO:0007669"/>
    <property type="project" value="TreeGrafter"/>
</dbReference>
<dbReference type="GO" id="GO:0005524">
    <property type="term" value="F:ATP binding"/>
    <property type="evidence" value="ECO:0007669"/>
    <property type="project" value="UniProtKB-KW"/>
</dbReference>
<dbReference type="GO" id="GO:0004639">
    <property type="term" value="F:phosphoribosylaminoimidazolesuccinocarboxamide synthase activity"/>
    <property type="evidence" value="ECO:0007669"/>
    <property type="project" value="UniProtKB-UniRule"/>
</dbReference>
<dbReference type="GO" id="GO:0006189">
    <property type="term" value="P:'de novo' IMP biosynthetic process"/>
    <property type="evidence" value="ECO:0007669"/>
    <property type="project" value="UniProtKB-UniRule"/>
</dbReference>
<dbReference type="GO" id="GO:0009236">
    <property type="term" value="P:cobalamin biosynthetic process"/>
    <property type="evidence" value="ECO:0007669"/>
    <property type="project" value="InterPro"/>
</dbReference>
<dbReference type="CDD" id="cd01415">
    <property type="entry name" value="SAICAR_synt_PurC"/>
    <property type="match status" value="1"/>
</dbReference>
<dbReference type="Gene3D" id="3.30.470.20">
    <property type="entry name" value="ATP-grasp fold, B domain"/>
    <property type="match status" value="1"/>
</dbReference>
<dbReference type="Gene3D" id="3.30.200.20">
    <property type="entry name" value="Phosphorylase Kinase, domain 1"/>
    <property type="match status" value="1"/>
</dbReference>
<dbReference type="HAMAP" id="MF_00137">
    <property type="entry name" value="SAICAR_synth"/>
    <property type="match status" value="1"/>
</dbReference>
<dbReference type="InterPro" id="IPR028923">
    <property type="entry name" value="SAICAR_synt/ADE2_N"/>
</dbReference>
<dbReference type="InterPro" id="IPR033934">
    <property type="entry name" value="SAICAR_synt_PurC"/>
</dbReference>
<dbReference type="InterPro" id="IPR050089">
    <property type="entry name" value="SAICAR_synthetase"/>
</dbReference>
<dbReference type="PANTHER" id="PTHR43599">
    <property type="entry name" value="MULTIFUNCTIONAL PROTEIN ADE2"/>
    <property type="match status" value="1"/>
</dbReference>
<dbReference type="PANTHER" id="PTHR43599:SF3">
    <property type="entry name" value="SI:DKEY-6E2.2"/>
    <property type="match status" value="1"/>
</dbReference>
<dbReference type="Pfam" id="PF01259">
    <property type="entry name" value="SAICAR_synt"/>
    <property type="match status" value="1"/>
</dbReference>
<dbReference type="SUPFAM" id="SSF56104">
    <property type="entry name" value="SAICAR synthase-like"/>
    <property type="match status" value="1"/>
</dbReference>